<sequence>MLLEVLNPRHYNVTSMVSEVVPIASIAILLLTGFLLLVWNYEDTSSIPGPSYFLGIGPLISHCRFLWMGIGSACNYYNKMYGEFMRVWVCGEETLIISKSSSMFHVMKHSHYISRFGSKLGLQFIGMHEKGIIFNNNPALWKAVRPFFTKALSGPGLVRMVTICADSITKHLDRLEEVCNDLGYVDVLTLMRRIMLDTSNILFLGIPLDESAIVVKIQGYFDAWQALLLKPDIFFKISWLCRKYEKSVKDLKDAMEILIEEKRHRISTAEKLEDCIDFATELIFAEKRGELTKENVNQCILEMLIAAPDTMSVSVFFMLFLIAKHPQVEEAMMREIQTVVGERDIRIDDMQKLKVVENFINESMRYQPVVDLVMRKALEDDVIDGYPVKKGTNIILNLGRMHRLEFFPKPNEFTLENFAKNVPYRYFQPFGFGPRACAGKYIAMVMMKVILVTLLRRFHVQTLQGRCVEKMQKKNDLSLHPDETSDRLEMIFIPRNSDKCLEC</sequence>
<protein>
    <recommendedName>
        <fullName evidence="4">Aromatase</fullName>
        <ecNumber evidence="2">1.14.14.14</ecNumber>
    </recommendedName>
    <alternativeName>
        <fullName>CYPXIX</fullName>
    </alternativeName>
    <alternativeName>
        <fullName>Cytochrome P-450AROM</fullName>
    </alternativeName>
    <alternativeName>
        <fullName>Cytochrome P450 19A1</fullName>
    </alternativeName>
    <alternativeName>
        <fullName>Estrogen synthase</fullName>
    </alternativeName>
</protein>
<gene>
    <name type="primary">CYP19A1</name>
    <name type="synonym">CYP19</name>
</gene>
<dbReference type="EC" id="1.14.14.14" evidence="2"/>
<dbReference type="EMBL" id="AY148883">
    <property type="protein sequence ID" value="AAN23836.1"/>
    <property type="molecule type" value="mRNA"/>
</dbReference>
<dbReference type="RefSeq" id="NP_001272676.1">
    <property type="nucleotide sequence ID" value="NM_001285747.1"/>
</dbReference>
<dbReference type="RefSeq" id="XP_013822500.2">
    <property type="nucleotide sequence ID" value="XM_013967046.2"/>
</dbReference>
<dbReference type="SMR" id="Q6YI21"/>
<dbReference type="STRING" id="9925.ENSCHIP00000020521"/>
<dbReference type="Ensembl" id="ENSCHIT00000028356.1">
    <property type="protein sequence ID" value="ENSCHIP00000020521.1"/>
    <property type="gene ID" value="ENSCHIG00000019108.1"/>
</dbReference>
<dbReference type="Ensembl" id="ENSCHIT00020041917">
    <property type="protein sequence ID" value="ENSCHIP00020031425"/>
    <property type="gene ID" value="ENSCHIG00020020185"/>
</dbReference>
<dbReference type="Ensembl" id="ENSCHIT00040016636">
    <property type="protein sequence ID" value="ENSCHIP00040013001"/>
    <property type="gene ID" value="ENSCHIG00040007628"/>
</dbReference>
<dbReference type="GeneID" id="100861413"/>
<dbReference type="KEGG" id="chx:100861413"/>
<dbReference type="CTD" id="1588"/>
<dbReference type="VGNC" id="VGNC:103466">
    <property type="gene designation" value="CYP19A1"/>
</dbReference>
<dbReference type="GeneTree" id="ENSGT00840000129915"/>
<dbReference type="OMA" id="LMRCIML"/>
<dbReference type="OrthoDB" id="1470350at2759"/>
<dbReference type="Proteomes" id="UP000291000">
    <property type="component" value="Chromosome 10"/>
</dbReference>
<dbReference type="Proteomes" id="UP000694566">
    <property type="component" value="Unplaced"/>
</dbReference>
<dbReference type="Bgee" id="ENSCHIG00000019108">
    <property type="expression patterns" value="Expressed in ovary"/>
</dbReference>
<dbReference type="GO" id="GO:0005789">
    <property type="term" value="C:endoplasmic reticulum membrane"/>
    <property type="evidence" value="ECO:0007669"/>
    <property type="project" value="UniProtKB-SubCell"/>
</dbReference>
<dbReference type="GO" id="GO:0070330">
    <property type="term" value="F:aromatase activity"/>
    <property type="evidence" value="ECO:0000250"/>
    <property type="project" value="UniProtKB"/>
</dbReference>
<dbReference type="GO" id="GO:0101021">
    <property type="term" value="F:estrogen 2-hydroxylase activity"/>
    <property type="evidence" value="ECO:0007669"/>
    <property type="project" value="RHEA"/>
</dbReference>
<dbReference type="GO" id="GO:0020037">
    <property type="term" value="F:heme binding"/>
    <property type="evidence" value="ECO:0000250"/>
    <property type="project" value="UniProtKB"/>
</dbReference>
<dbReference type="GO" id="GO:0005506">
    <property type="term" value="F:iron ion binding"/>
    <property type="evidence" value="ECO:0007669"/>
    <property type="project" value="InterPro"/>
</dbReference>
<dbReference type="GO" id="GO:0008585">
    <property type="term" value="P:female gonad development"/>
    <property type="evidence" value="ECO:0007669"/>
    <property type="project" value="TreeGrafter"/>
</dbReference>
<dbReference type="GO" id="GO:0006629">
    <property type="term" value="P:lipid metabolic process"/>
    <property type="evidence" value="ECO:0007669"/>
    <property type="project" value="UniProtKB-KW"/>
</dbReference>
<dbReference type="GO" id="GO:0032355">
    <property type="term" value="P:response to estradiol"/>
    <property type="evidence" value="ECO:0007669"/>
    <property type="project" value="TreeGrafter"/>
</dbReference>
<dbReference type="CDD" id="cd20616">
    <property type="entry name" value="CYP19A1"/>
    <property type="match status" value="1"/>
</dbReference>
<dbReference type="FunFam" id="1.10.630.10:FF:000032">
    <property type="entry name" value="Cytochrome P450 aromatase"/>
    <property type="match status" value="1"/>
</dbReference>
<dbReference type="Gene3D" id="1.10.630.10">
    <property type="entry name" value="Cytochrome P450"/>
    <property type="match status" value="1"/>
</dbReference>
<dbReference type="InterPro" id="IPR001128">
    <property type="entry name" value="Cyt_P450"/>
</dbReference>
<dbReference type="InterPro" id="IPR017972">
    <property type="entry name" value="Cyt_P450_CS"/>
</dbReference>
<dbReference type="InterPro" id="IPR002401">
    <property type="entry name" value="Cyt_P450_E_grp-I"/>
</dbReference>
<dbReference type="InterPro" id="IPR036396">
    <property type="entry name" value="Cyt_P450_sf"/>
</dbReference>
<dbReference type="InterPro" id="IPR050196">
    <property type="entry name" value="Cytochrome_P450_Monoox"/>
</dbReference>
<dbReference type="PANTHER" id="PTHR24291:SF43">
    <property type="entry name" value="AROMATASE"/>
    <property type="match status" value="1"/>
</dbReference>
<dbReference type="PANTHER" id="PTHR24291">
    <property type="entry name" value="CYTOCHROME P450 FAMILY 4"/>
    <property type="match status" value="1"/>
</dbReference>
<dbReference type="Pfam" id="PF00067">
    <property type="entry name" value="p450"/>
    <property type="match status" value="1"/>
</dbReference>
<dbReference type="PRINTS" id="PR00463">
    <property type="entry name" value="EP450I"/>
</dbReference>
<dbReference type="PRINTS" id="PR00385">
    <property type="entry name" value="P450"/>
</dbReference>
<dbReference type="SUPFAM" id="SSF48264">
    <property type="entry name" value="Cytochrome P450"/>
    <property type="match status" value="1"/>
</dbReference>
<dbReference type="PROSITE" id="PS00086">
    <property type="entry name" value="CYTOCHROME_P450"/>
    <property type="match status" value="1"/>
</dbReference>
<reference key="1">
    <citation type="journal article" date="2004" name="Theriogenology">
        <title>Isolation and characterization of goat ovarian aromatase cDNA: assessment of the activity using an intact cell system and placental expression.</title>
        <authorList>
            <person name="Bobes R.J."/>
            <person name="Miranda C."/>
            <person name="Perez-Martinez M."/>
            <person name="Luu-The V."/>
            <person name="Romano M.C."/>
        </authorList>
    </citation>
    <scope>NUCLEOTIDE SEQUENCE [MRNA]</scope>
    <source>
        <tissue>Ovary</tissue>
    </source>
</reference>
<keyword id="KW-0256">Endoplasmic reticulum</keyword>
<keyword id="KW-0349">Heme</keyword>
<keyword id="KW-0408">Iron</keyword>
<keyword id="KW-0443">Lipid metabolism</keyword>
<keyword id="KW-0472">Membrane</keyword>
<keyword id="KW-0479">Metal-binding</keyword>
<keyword id="KW-0492">Microsome</keyword>
<keyword id="KW-0503">Monooxygenase</keyword>
<keyword id="KW-0560">Oxidoreductase</keyword>
<keyword id="KW-1185">Reference proteome</keyword>
<keyword id="KW-0812">Transmembrane</keyword>
<keyword id="KW-1133">Transmembrane helix</keyword>
<organism>
    <name type="scientific">Capra hircus</name>
    <name type="common">Goat</name>
    <dbReference type="NCBI Taxonomy" id="9925"/>
    <lineage>
        <taxon>Eukaryota</taxon>
        <taxon>Metazoa</taxon>
        <taxon>Chordata</taxon>
        <taxon>Craniata</taxon>
        <taxon>Vertebrata</taxon>
        <taxon>Euteleostomi</taxon>
        <taxon>Mammalia</taxon>
        <taxon>Eutheria</taxon>
        <taxon>Laurasiatheria</taxon>
        <taxon>Artiodactyla</taxon>
        <taxon>Ruminantia</taxon>
        <taxon>Pecora</taxon>
        <taxon>Bovidae</taxon>
        <taxon>Caprinae</taxon>
        <taxon>Capra</taxon>
    </lineage>
</organism>
<feature type="chain" id="PRO_0000051953" description="Aromatase">
    <location>
        <begin position="1"/>
        <end position="503"/>
    </location>
</feature>
<feature type="transmembrane region" description="Helical" evidence="3">
    <location>
        <begin position="19"/>
        <end position="39"/>
    </location>
</feature>
<feature type="transmembrane region" description="Helical" evidence="3">
    <location>
        <begin position="53"/>
        <end position="73"/>
    </location>
</feature>
<feature type="transmembrane region" description="Helical" evidence="3">
    <location>
        <begin position="303"/>
        <end position="323"/>
    </location>
</feature>
<feature type="binding site" evidence="1">
    <location>
        <position position="309"/>
    </location>
    <ligand>
        <name>substrate</name>
    </ligand>
</feature>
<feature type="binding site" evidence="1">
    <location>
        <position position="374"/>
    </location>
    <ligand>
        <name>substrate</name>
    </ligand>
</feature>
<feature type="binding site" description="axial binding residue" evidence="1">
    <location>
        <position position="437"/>
    </location>
    <ligand>
        <name>heme</name>
        <dbReference type="ChEBI" id="CHEBI:30413"/>
    </ligand>
    <ligandPart>
        <name>Fe</name>
        <dbReference type="ChEBI" id="CHEBI:18248"/>
    </ligandPart>
</feature>
<proteinExistence type="evidence at transcript level"/>
<name>CP19A_CAPHI</name>
<accession>Q6YI21</accession>
<comment type="function">
    <text evidence="2">A cytochrome P450 monooxygenase that catalyzes the conversion of C19 androgens, androst-4-ene-3,17-dione (androstenedione) and testosterone to the C18 estrogens, estrone and estradiol, respectively. Catalyzes three successive oxidations of C19 androgens: two conventional oxidations at C19 yielding 19-hydroxy and 19-oxo/19-aldehyde derivatives, followed by a third oxidative aromatization step that involves C1-beta hydrogen abstraction combined with cleavage of the C10-C19 bond to yield a phenolic A ring and formic acid. Alternatively, the third oxidative reaction yields a 19-norsteroid and formic acid. Converts dihydrotestosterone to delta1,10-dehydro 19-nordihydrotestosterone and may play a role in homeostasis of this potent androgen. Also displays 2-hydroxylase activity toward estrone. Mechanistically, uses molecular oxygen inserting one oxygen atom into a substrate, and reducing the second into a water molecule, with two electrons provided by NADPH via cytochrome P450 reductase (CPR; NADPH-ferrihemoprotein reductase).</text>
</comment>
<comment type="catalytic activity">
    <reaction evidence="2">
        <text>testosterone + 3 reduced [NADPH--hemoprotein reductase] + 3 O2 = 17beta-estradiol + formate + 3 oxidized [NADPH--hemoprotein reductase] + 4 H2O + 4 H(+)</text>
        <dbReference type="Rhea" id="RHEA:38191"/>
        <dbReference type="Rhea" id="RHEA-COMP:11964"/>
        <dbReference type="Rhea" id="RHEA-COMP:11965"/>
        <dbReference type="ChEBI" id="CHEBI:15377"/>
        <dbReference type="ChEBI" id="CHEBI:15378"/>
        <dbReference type="ChEBI" id="CHEBI:15379"/>
        <dbReference type="ChEBI" id="CHEBI:15740"/>
        <dbReference type="ChEBI" id="CHEBI:16469"/>
        <dbReference type="ChEBI" id="CHEBI:17347"/>
        <dbReference type="ChEBI" id="CHEBI:57618"/>
        <dbReference type="ChEBI" id="CHEBI:58210"/>
        <dbReference type="EC" id="1.14.14.14"/>
    </reaction>
    <physiologicalReaction direction="left-to-right" evidence="2">
        <dbReference type="Rhea" id="RHEA:38192"/>
    </physiologicalReaction>
</comment>
<comment type="catalytic activity">
    <reaction evidence="2">
        <text>androst-4-ene-3,17-dione + 3 reduced [NADPH--hemoprotein reductase] + 3 O2 = estrone + formate + 3 oxidized [NADPH--hemoprotein reductase] + 4 H2O + 4 H(+)</text>
        <dbReference type="Rhea" id="RHEA:38195"/>
        <dbReference type="Rhea" id="RHEA-COMP:11964"/>
        <dbReference type="Rhea" id="RHEA-COMP:11965"/>
        <dbReference type="ChEBI" id="CHEBI:15377"/>
        <dbReference type="ChEBI" id="CHEBI:15378"/>
        <dbReference type="ChEBI" id="CHEBI:15379"/>
        <dbReference type="ChEBI" id="CHEBI:15740"/>
        <dbReference type="ChEBI" id="CHEBI:16422"/>
        <dbReference type="ChEBI" id="CHEBI:17263"/>
        <dbReference type="ChEBI" id="CHEBI:57618"/>
        <dbReference type="ChEBI" id="CHEBI:58210"/>
        <dbReference type="EC" id="1.14.14.14"/>
    </reaction>
    <physiologicalReaction direction="left-to-right" evidence="2">
        <dbReference type="Rhea" id="RHEA:38196"/>
    </physiologicalReaction>
</comment>
<comment type="catalytic activity">
    <reaction evidence="2">
        <text>androst-4-ene-3,17-dione + reduced [NADPH--hemoprotein reductase] + O2 = 19-hydroxyandrost-4-ene-3,17-dione + oxidized [NADPH--hemoprotein reductase] + H2O + H(+)</text>
        <dbReference type="Rhea" id="RHEA:38199"/>
        <dbReference type="Rhea" id="RHEA-COMP:11964"/>
        <dbReference type="Rhea" id="RHEA-COMP:11965"/>
        <dbReference type="ChEBI" id="CHEBI:15377"/>
        <dbReference type="ChEBI" id="CHEBI:15378"/>
        <dbReference type="ChEBI" id="CHEBI:15379"/>
        <dbReference type="ChEBI" id="CHEBI:16422"/>
        <dbReference type="ChEBI" id="CHEBI:27576"/>
        <dbReference type="ChEBI" id="CHEBI:57618"/>
        <dbReference type="ChEBI" id="CHEBI:58210"/>
    </reaction>
    <physiologicalReaction direction="left-to-right" evidence="2">
        <dbReference type="Rhea" id="RHEA:38200"/>
    </physiologicalReaction>
</comment>
<comment type="catalytic activity">
    <reaction evidence="2">
        <text>19-hydroxyandrost-4-ene-3,17-dione + reduced [NADPH--hemoprotein reductase] + O2 = 19-oxo-androst-4-ene-3,17-dione + oxidized [NADPH--hemoprotein reductase] + 2 H2O + H(+)</text>
        <dbReference type="Rhea" id="RHEA:38203"/>
        <dbReference type="Rhea" id="RHEA-COMP:11964"/>
        <dbReference type="Rhea" id="RHEA-COMP:11965"/>
        <dbReference type="ChEBI" id="CHEBI:799"/>
        <dbReference type="ChEBI" id="CHEBI:15377"/>
        <dbReference type="ChEBI" id="CHEBI:15378"/>
        <dbReference type="ChEBI" id="CHEBI:15379"/>
        <dbReference type="ChEBI" id="CHEBI:27576"/>
        <dbReference type="ChEBI" id="CHEBI:57618"/>
        <dbReference type="ChEBI" id="CHEBI:58210"/>
    </reaction>
    <physiologicalReaction direction="left-to-right" evidence="2">
        <dbReference type="Rhea" id="RHEA:38204"/>
    </physiologicalReaction>
</comment>
<comment type="catalytic activity">
    <reaction evidence="2">
        <text>19-oxo-androst-4-ene-3,17-dione + reduced [NADPH--hemoprotein reductase] + O2 = estrone + formate + oxidized [NADPH--hemoprotein reductase] + H2O + 2 H(+)</text>
        <dbReference type="Rhea" id="RHEA:38207"/>
        <dbReference type="Rhea" id="RHEA-COMP:11964"/>
        <dbReference type="Rhea" id="RHEA-COMP:11965"/>
        <dbReference type="ChEBI" id="CHEBI:799"/>
        <dbReference type="ChEBI" id="CHEBI:15377"/>
        <dbReference type="ChEBI" id="CHEBI:15378"/>
        <dbReference type="ChEBI" id="CHEBI:15379"/>
        <dbReference type="ChEBI" id="CHEBI:15740"/>
        <dbReference type="ChEBI" id="CHEBI:17263"/>
        <dbReference type="ChEBI" id="CHEBI:57618"/>
        <dbReference type="ChEBI" id="CHEBI:58210"/>
    </reaction>
    <physiologicalReaction direction="left-to-right" evidence="2">
        <dbReference type="Rhea" id="RHEA:38208"/>
    </physiologicalReaction>
</comment>
<comment type="catalytic activity">
    <reaction evidence="2">
        <text>estrone + reduced [NADPH--hemoprotein reductase] + O2 = 2-hydroxyestrone + oxidized [NADPH--hemoprotein reductase] + H2O + H(+)</text>
        <dbReference type="Rhea" id="RHEA:47208"/>
        <dbReference type="Rhea" id="RHEA-COMP:11964"/>
        <dbReference type="Rhea" id="RHEA-COMP:11965"/>
        <dbReference type="ChEBI" id="CHEBI:1156"/>
        <dbReference type="ChEBI" id="CHEBI:15377"/>
        <dbReference type="ChEBI" id="CHEBI:15378"/>
        <dbReference type="ChEBI" id="CHEBI:15379"/>
        <dbReference type="ChEBI" id="CHEBI:17263"/>
        <dbReference type="ChEBI" id="CHEBI:57618"/>
        <dbReference type="ChEBI" id="CHEBI:58210"/>
    </reaction>
    <physiologicalReaction direction="left-to-right" evidence="2">
        <dbReference type="Rhea" id="RHEA:47209"/>
    </physiologicalReaction>
</comment>
<comment type="catalytic activity">
    <reaction evidence="2">
        <text>17beta-hydroxy-5alpha-androstan-3-one + reduced [NADPH--hemoprotein reductase] + O2 = 17beta,19-dihydroxy-3-oxo-5alpha-androstanone + oxidized [NADPH--hemoprotein reductase] + H2O + H(+)</text>
        <dbReference type="Rhea" id="RHEA:53200"/>
        <dbReference type="Rhea" id="RHEA-COMP:11964"/>
        <dbReference type="Rhea" id="RHEA-COMP:11965"/>
        <dbReference type="ChEBI" id="CHEBI:15377"/>
        <dbReference type="ChEBI" id="CHEBI:15378"/>
        <dbReference type="ChEBI" id="CHEBI:15379"/>
        <dbReference type="ChEBI" id="CHEBI:16330"/>
        <dbReference type="ChEBI" id="CHEBI:57618"/>
        <dbReference type="ChEBI" id="CHEBI:58210"/>
        <dbReference type="ChEBI" id="CHEBI:137031"/>
    </reaction>
    <physiologicalReaction direction="left-to-right" evidence="2">
        <dbReference type="Rhea" id="RHEA:53201"/>
    </physiologicalReaction>
</comment>
<comment type="catalytic activity">
    <reaction evidence="2">
        <text>17beta,19-dihydroxy-3-oxo-5alpha-androstanone + reduced [NADPH--hemoprotein reductase] + O2 = 17beta-hydroxy-3,19-dioxo-5alpha-androstanone + oxidized [NADPH--hemoprotein reductase] + 2 H2O + H(+)</text>
        <dbReference type="Rhea" id="RHEA:53204"/>
        <dbReference type="Rhea" id="RHEA-COMP:11964"/>
        <dbReference type="Rhea" id="RHEA-COMP:11965"/>
        <dbReference type="ChEBI" id="CHEBI:15377"/>
        <dbReference type="ChEBI" id="CHEBI:15378"/>
        <dbReference type="ChEBI" id="CHEBI:15379"/>
        <dbReference type="ChEBI" id="CHEBI:57618"/>
        <dbReference type="ChEBI" id="CHEBI:58210"/>
        <dbReference type="ChEBI" id="CHEBI:137031"/>
        <dbReference type="ChEBI" id="CHEBI:137032"/>
    </reaction>
    <physiologicalReaction direction="left-to-right" evidence="2">
        <dbReference type="Rhea" id="RHEA:53205"/>
    </physiologicalReaction>
</comment>
<comment type="catalytic activity">
    <reaction evidence="2">
        <text>17beta-hydroxy-3,19-dioxo-5alpha-androstanone + reduced [NADPH--hemoprotein reductase] + O2 = 17beta-hydroxy-3-oxo-19-nor-5alpha-androst-1-ene + formate + oxidized [NADPH--hemoprotein reductase] + H2O + 2 H(+)</text>
        <dbReference type="Rhea" id="RHEA:53276"/>
        <dbReference type="Rhea" id="RHEA-COMP:11964"/>
        <dbReference type="Rhea" id="RHEA-COMP:11965"/>
        <dbReference type="ChEBI" id="CHEBI:15377"/>
        <dbReference type="ChEBI" id="CHEBI:15378"/>
        <dbReference type="ChEBI" id="CHEBI:15379"/>
        <dbReference type="ChEBI" id="CHEBI:15740"/>
        <dbReference type="ChEBI" id="CHEBI:57618"/>
        <dbReference type="ChEBI" id="CHEBI:58210"/>
        <dbReference type="ChEBI" id="CHEBI:137032"/>
        <dbReference type="ChEBI" id="CHEBI:137110"/>
    </reaction>
    <physiologicalReaction direction="left-to-right" evidence="2">
        <dbReference type="Rhea" id="RHEA:53277"/>
    </physiologicalReaction>
</comment>
<comment type="cofactor">
    <cofactor evidence="2">
        <name>heme</name>
        <dbReference type="ChEBI" id="CHEBI:30413"/>
    </cofactor>
</comment>
<comment type="pathway">
    <text evidence="2">Steroid hormone biosynthesis.</text>
</comment>
<comment type="subcellular location">
    <subcellularLocation>
        <location evidence="2">Endoplasmic reticulum membrane</location>
        <topology evidence="5">Multi-pass membrane protein</topology>
    </subcellularLocation>
    <subcellularLocation>
        <location evidence="2">Microsome membrane</location>
        <topology evidence="5">Multi-pass membrane protein</topology>
    </subcellularLocation>
</comment>
<comment type="similarity">
    <text evidence="5">Belongs to the cytochrome P450 family.</text>
</comment>
<evidence type="ECO:0000250" key="1"/>
<evidence type="ECO:0000250" key="2">
    <source>
        <dbReference type="UniProtKB" id="P11511"/>
    </source>
</evidence>
<evidence type="ECO:0000255" key="3"/>
<evidence type="ECO:0000303" key="4">
    <source>
    </source>
</evidence>
<evidence type="ECO:0000305" key="5"/>